<reference key="1">
    <citation type="journal article" date="2005" name="Nature">
        <title>Sequencing of Aspergillus nidulans and comparative analysis with A. fumigatus and A. oryzae.</title>
        <authorList>
            <person name="Galagan J.E."/>
            <person name="Calvo S.E."/>
            <person name="Cuomo C."/>
            <person name="Ma L.-J."/>
            <person name="Wortman J.R."/>
            <person name="Batzoglou S."/>
            <person name="Lee S.-I."/>
            <person name="Bastuerkmen M."/>
            <person name="Spevak C.C."/>
            <person name="Clutterbuck J."/>
            <person name="Kapitonov V."/>
            <person name="Jurka J."/>
            <person name="Scazzocchio C."/>
            <person name="Farman M.L."/>
            <person name="Butler J."/>
            <person name="Purcell S."/>
            <person name="Harris S."/>
            <person name="Braus G.H."/>
            <person name="Draht O."/>
            <person name="Busch S."/>
            <person name="D'Enfert C."/>
            <person name="Bouchier C."/>
            <person name="Goldman G.H."/>
            <person name="Bell-Pedersen D."/>
            <person name="Griffiths-Jones S."/>
            <person name="Doonan J.H."/>
            <person name="Yu J."/>
            <person name="Vienken K."/>
            <person name="Pain A."/>
            <person name="Freitag M."/>
            <person name="Selker E.U."/>
            <person name="Archer D.B."/>
            <person name="Penalva M.A."/>
            <person name="Oakley B.R."/>
            <person name="Momany M."/>
            <person name="Tanaka T."/>
            <person name="Kumagai T."/>
            <person name="Asai K."/>
            <person name="Machida M."/>
            <person name="Nierman W.C."/>
            <person name="Denning D.W."/>
            <person name="Caddick M.X."/>
            <person name="Hynes M."/>
            <person name="Paoletti M."/>
            <person name="Fischer R."/>
            <person name="Miller B.L."/>
            <person name="Dyer P.S."/>
            <person name="Sachs M.S."/>
            <person name="Osmani S.A."/>
            <person name="Birren B.W."/>
        </authorList>
    </citation>
    <scope>NUCLEOTIDE SEQUENCE [LARGE SCALE GENOMIC DNA]</scope>
    <source>
        <strain>FGSC A4 / ATCC 38163 / CBS 112.46 / NRRL 194 / M139</strain>
    </source>
</reference>
<reference key="2">
    <citation type="journal article" date="2009" name="Fungal Genet. Biol.">
        <title>The 2008 update of the Aspergillus nidulans genome annotation: a community effort.</title>
        <authorList>
            <person name="Wortman J.R."/>
            <person name="Gilsenan J.M."/>
            <person name="Joardar V."/>
            <person name="Deegan J."/>
            <person name="Clutterbuck J."/>
            <person name="Andersen M.R."/>
            <person name="Archer D."/>
            <person name="Bencina M."/>
            <person name="Braus G."/>
            <person name="Coutinho P."/>
            <person name="von Dohren H."/>
            <person name="Doonan J."/>
            <person name="Driessen A.J."/>
            <person name="Durek P."/>
            <person name="Espeso E."/>
            <person name="Fekete E."/>
            <person name="Flipphi M."/>
            <person name="Estrada C.G."/>
            <person name="Geysens S."/>
            <person name="Goldman G."/>
            <person name="de Groot P.W."/>
            <person name="Hansen K."/>
            <person name="Harris S.D."/>
            <person name="Heinekamp T."/>
            <person name="Helmstaedt K."/>
            <person name="Henrissat B."/>
            <person name="Hofmann G."/>
            <person name="Homan T."/>
            <person name="Horio T."/>
            <person name="Horiuchi H."/>
            <person name="James S."/>
            <person name="Jones M."/>
            <person name="Karaffa L."/>
            <person name="Karanyi Z."/>
            <person name="Kato M."/>
            <person name="Keller N."/>
            <person name="Kelly D.E."/>
            <person name="Kiel J.A."/>
            <person name="Kim J.M."/>
            <person name="van der Klei I.J."/>
            <person name="Klis F.M."/>
            <person name="Kovalchuk A."/>
            <person name="Krasevec N."/>
            <person name="Kubicek C.P."/>
            <person name="Liu B."/>
            <person name="Maccabe A."/>
            <person name="Meyer V."/>
            <person name="Mirabito P."/>
            <person name="Miskei M."/>
            <person name="Mos M."/>
            <person name="Mullins J."/>
            <person name="Nelson D.R."/>
            <person name="Nielsen J."/>
            <person name="Oakley B.R."/>
            <person name="Osmani S.A."/>
            <person name="Pakula T."/>
            <person name="Paszewski A."/>
            <person name="Paulsen I."/>
            <person name="Pilsyk S."/>
            <person name="Pocsi I."/>
            <person name="Punt P.J."/>
            <person name="Ram A.F."/>
            <person name="Ren Q."/>
            <person name="Robellet X."/>
            <person name="Robson G."/>
            <person name="Seiboth B."/>
            <person name="van Solingen P."/>
            <person name="Specht T."/>
            <person name="Sun J."/>
            <person name="Taheri-Talesh N."/>
            <person name="Takeshita N."/>
            <person name="Ussery D."/>
            <person name="vanKuyk P.A."/>
            <person name="Visser H."/>
            <person name="van de Vondervoort P.J."/>
            <person name="de Vries R.P."/>
            <person name="Walton J."/>
            <person name="Xiang X."/>
            <person name="Xiong Y."/>
            <person name="Zeng A.P."/>
            <person name="Brandt B.W."/>
            <person name="Cornell M.J."/>
            <person name="van den Hondel C.A."/>
            <person name="Visser J."/>
            <person name="Oliver S.G."/>
            <person name="Turner G."/>
        </authorList>
    </citation>
    <scope>GENOME REANNOTATION</scope>
    <source>
        <strain>FGSC A4 / ATCC 38163 / CBS 112.46 / NRRL 194 / M139</strain>
    </source>
</reference>
<gene>
    <name type="primary">lap1</name>
    <name type="ORF">AN7035</name>
</gene>
<sequence length="390" mass="43225">MKLSTALVLGATATGAWSYAIPQLEQEVLELPETHYEQQEKYLIELSPYQTRWVTEEEKWALKLDGVNFIDITEDRNYGLFPTLDAGSYVNYPQKMGYVDTVKGLIAGLSMDNMRKDLENFTSFHTRYYKSSSGVESAQWLYDQVSKVVRDSGADKFGATVQKFDHSWGQFSIIARIPGLSKKTVVLGAHQDSINLFLPSFLGAPGADDDGSGTVTILEALRGLLKSDIVAHGQSPNTIEFHWYSAEEGGMLGSQAIFSKYKKNQADVKAMLQQDMTGYVQGTKHAGQKESIGVMTDFVDPALTSFLKNTIVTYCAIPFVETKCGYACSDHTSASKYGYPSAMATESTMENSNKHIHTTDDKISYLSFDHMLEHAKLTLGFAYELAFAAL</sequence>
<keyword id="KW-0031">Aminopeptidase</keyword>
<keyword id="KW-1015">Disulfide bond</keyword>
<keyword id="KW-0325">Glycoprotein</keyword>
<keyword id="KW-0378">Hydrolase</keyword>
<keyword id="KW-0479">Metal-binding</keyword>
<keyword id="KW-0645">Protease</keyword>
<keyword id="KW-1185">Reference proteome</keyword>
<keyword id="KW-0964">Secreted</keyword>
<keyword id="KW-0732">Signal</keyword>
<keyword id="KW-0862">Zinc</keyword>
<keyword id="KW-0865">Zymogen</keyword>
<evidence type="ECO:0000250" key="1"/>
<evidence type="ECO:0000255" key="2"/>
<evidence type="ECO:0000305" key="3"/>
<accession>Q5AXE5</accession>
<accession>C8VB70</accession>
<name>LAP1_EMENI</name>
<protein>
    <recommendedName>
        <fullName>Leucine aminopeptidase 1</fullName>
        <ecNumber>3.4.11.-</ecNumber>
    </recommendedName>
    <alternativeName>
        <fullName>Leucyl aminopeptidase 1</fullName>
        <shortName>LAP1</shortName>
    </alternativeName>
</protein>
<feature type="signal peptide" evidence="2">
    <location>
        <begin position="1"/>
        <end position="18"/>
    </location>
</feature>
<feature type="propeptide" id="PRO_0000412407" evidence="1">
    <location>
        <begin position="19"/>
        <end position="90"/>
    </location>
</feature>
<feature type="chain" id="PRO_0000412408" description="Leucine aminopeptidase 1">
    <location>
        <begin position="91"/>
        <end position="390"/>
    </location>
</feature>
<feature type="binding site" evidence="1">
    <location>
        <position position="190"/>
    </location>
    <ligand>
        <name>Zn(2+)</name>
        <dbReference type="ChEBI" id="CHEBI:29105"/>
        <label>1</label>
    </ligand>
</feature>
<feature type="binding site" evidence="1">
    <location>
        <position position="209"/>
    </location>
    <ligand>
        <name>Zn(2+)</name>
        <dbReference type="ChEBI" id="CHEBI:29105"/>
        <label>1</label>
    </ligand>
</feature>
<feature type="binding site" evidence="1">
    <location>
        <position position="209"/>
    </location>
    <ligand>
        <name>Zn(2+)</name>
        <dbReference type="ChEBI" id="CHEBI:29105"/>
        <label>2</label>
        <note>catalytic</note>
    </ligand>
</feature>
<feature type="binding site" evidence="1">
    <location>
        <position position="248"/>
    </location>
    <ligand>
        <name>Zn(2+)</name>
        <dbReference type="ChEBI" id="CHEBI:29105"/>
        <label>2</label>
        <note>catalytic</note>
    </ligand>
</feature>
<feature type="binding site" evidence="1">
    <location>
        <position position="275"/>
    </location>
    <ligand>
        <name>Zn(2+)</name>
        <dbReference type="ChEBI" id="CHEBI:29105"/>
        <label>1</label>
    </ligand>
</feature>
<feature type="binding site" evidence="1">
    <location>
        <position position="357"/>
    </location>
    <ligand>
        <name>Zn(2+)</name>
        <dbReference type="ChEBI" id="CHEBI:29105"/>
        <label>2</label>
        <note>catalytic</note>
    </ligand>
</feature>
<feature type="glycosylation site" description="N-linked (GlcNAc...) asparagine" evidence="2">
    <location>
        <position position="120"/>
    </location>
</feature>
<feature type="disulfide bond" evidence="1">
    <location>
        <begin position="324"/>
        <end position="328"/>
    </location>
</feature>
<proteinExistence type="inferred from homology"/>
<comment type="function">
    <text evidence="1">Extracellular aminopeptidase that allows assimilation of proteinaceous substrates.</text>
</comment>
<comment type="cofactor">
    <cofactor evidence="1">
        <name>Zn(2+)</name>
        <dbReference type="ChEBI" id="CHEBI:29105"/>
    </cofactor>
    <text evidence="1">Binds 2 Zn(2+) ions per subunit.</text>
</comment>
<comment type="subunit">
    <text evidence="1">Monomer.</text>
</comment>
<comment type="subcellular location">
    <subcellularLocation>
        <location evidence="1">Secreted</location>
    </subcellularLocation>
</comment>
<comment type="similarity">
    <text evidence="3">Belongs to the peptidase M28 family. M28E subfamily.</text>
</comment>
<dbReference type="EC" id="3.4.11.-"/>
<dbReference type="EMBL" id="AACD01000117">
    <property type="protein sequence ID" value="EAA61681.1"/>
    <property type="molecule type" value="Genomic_DNA"/>
</dbReference>
<dbReference type="EMBL" id="BN001304">
    <property type="protein sequence ID" value="CBF79215.1"/>
    <property type="molecule type" value="Genomic_DNA"/>
</dbReference>
<dbReference type="RefSeq" id="XP_664639.1">
    <property type="nucleotide sequence ID" value="XM_659547.1"/>
</dbReference>
<dbReference type="SMR" id="Q5AXE5"/>
<dbReference type="FunCoup" id="Q5AXE5">
    <property type="interactions" value="23"/>
</dbReference>
<dbReference type="STRING" id="227321.Q5AXE5"/>
<dbReference type="MEROPS" id="M28.022"/>
<dbReference type="GlyCosmos" id="Q5AXE5">
    <property type="glycosylation" value="1 site, No reported glycans"/>
</dbReference>
<dbReference type="EnsemblFungi" id="CBF79215">
    <property type="protein sequence ID" value="CBF79215"/>
    <property type="gene ID" value="ANIA_07035"/>
</dbReference>
<dbReference type="KEGG" id="ani:ANIA_07035"/>
<dbReference type="VEuPathDB" id="FungiDB:AN7035"/>
<dbReference type="eggNOG" id="KOG2195">
    <property type="taxonomic scope" value="Eukaryota"/>
</dbReference>
<dbReference type="HOGENOM" id="CLU_025866_0_0_1"/>
<dbReference type="InParanoid" id="Q5AXE5"/>
<dbReference type="OMA" id="GMLQQDM"/>
<dbReference type="OrthoDB" id="2214at2759"/>
<dbReference type="Proteomes" id="UP000000560">
    <property type="component" value="Chromosome IV"/>
</dbReference>
<dbReference type="GO" id="GO:0005576">
    <property type="term" value="C:extracellular region"/>
    <property type="evidence" value="ECO:0007669"/>
    <property type="project" value="UniProtKB-SubCell"/>
</dbReference>
<dbReference type="GO" id="GO:0004177">
    <property type="term" value="F:aminopeptidase activity"/>
    <property type="evidence" value="ECO:0007669"/>
    <property type="project" value="UniProtKB-KW"/>
</dbReference>
<dbReference type="GO" id="GO:0046872">
    <property type="term" value="F:metal ion binding"/>
    <property type="evidence" value="ECO:0007669"/>
    <property type="project" value="UniProtKB-KW"/>
</dbReference>
<dbReference type="GO" id="GO:0008235">
    <property type="term" value="F:metalloexopeptidase activity"/>
    <property type="evidence" value="ECO:0007669"/>
    <property type="project" value="InterPro"/>
</dbReference>
<dbReference type="GO" id="GO:0006508">
    <property type="term" value="P:proteolysis"/>
    <property type="evidence" value="ECO:0000318"/>
    <property type="project" value="GO_Central"/>
</dbReference>
<dbReference type="CDD" id="cd03879">
    <property type="entry name" value="M28_AAP"/>
    <property type="match status" value="1"/>
</dbReference>
<dbReference type="FunFam" id="3.40.630.10:FF:000042">
    <property type="entry name" value="Peptide hydrolase"/>
    <property type="match status" value="1"/>
</dbReference>
<dbReference type="Gene3D" id="3.40.630.10">
    <property type="entry name" value="Zn peptidases"/>
    <property type="match status" value="1"/>
</dbReference>
<dbReference type="InterPro" id="IPR045175">
    <property type="entry name" value="M28_fam"/>
</dbReference>
<dbReference type="InterPro" id="IPR007484">
    <property type="entry name" value="Peptidase_M28"/>
</dbReference>
<dbReference type="PANTHER" id="PTHR12147:SF56">
    <property type="entry name" value="AMINOPEPTIDASE YDR415C-RELATED"/>
    <property type="match status" value="1"/>
</dbReference>
<dbReference type="PANTHER" id="PTHR12147">
    <property type="entry name" value="METALLOPEPTIDASE M28 FAMILY MEMBER"/>
    <property type="match status" value="1"/>
</dbReference>
<dbReference type="Pfam" id="PF04389">
    <property type="entry name" value="Peptidase_M28"/>
    <property type="match status" value="1"/>
</dbReference>
<dbReference type="SUPFAM" id="SSF53187">
    <property type="entry name" value="Zn-dependent exopeptidases"/>
    <property type="match status" value="1"/>
</dbReference>
<organism>
    <name type="scientific">Emericella nidulans (strain FGSC A4 / ATCC 38163 / CBS 112.46 / NRRL 194 / M139)</name>
    <name type="common">Aspergillus nidulans</name>
    <dbReference type="NCBI Taxonomy" id="227321"/>
    <lineage>
        <taxon>Eukaryota</taxon>
        <taxon>Fungi</taxon>
        <taxon>Dikarya</taxon>
        <taxon>Ascomycota</taxon>
        <taxon>Pezizomycotina</taxon>
        <taxon>Eurotiomycetes</taxon>
        <taxon>Eurotiomycetidae</taxon>
        <taxon>Eurotiales</taxon>
        <taxon>Aspergillaceae</taxon>
        <taxon>Aspergillus</taxon>
        <taxon>Aspergillus subgen. Nidulantes</taxon>
    </lineage>
</organism>